<keyword id="KW-0963">Cytoplasm</keyword>
<keyword id="KW-0378">Hydrolase</keyword>
<keyword id="KW-0536">Nodulation</keyword>
<comment type="function">
    <text>Is involved in generating a small heat-stable compound (Nod), an acylated oligomer of N-acetylglucosamine, that stimulates mitosis in various plant protoplasts.</text>
</comment>
<comment type="subcellular location">
    <subcellularLocation>
        <location>Cytoplasm</location>
    </subcellularLocation>
</comment>
<comment type="similarity">
    <text evidence="3">Belongs to the polysaccharide deacetylase family.</text>
</comment>
<name>NODB_BRASN</name>
<protein>
    <recommendedName>
        <fullName>Chitooligosaccharide deacetylase</fullName>
        <ecNumber>3.5.1.-</ecNumber>
    </recommendedName>
    <alternativeName>
        <fullName>Nodulation protein B</fullName>
    </alternativeName>
</protein>
<dbReference type="EC" id="3.5.1.-"/>
<dbReference type="EMBL" id="U33192">
    <property type="protein sequence ID" value="AAB06560.1"/>
    <property type="molecule type" value="Genomic_DNA"/>
</dbReference>
<dbReference type="SMR" id="P50353"/>
<dbReference type="GO" id="GO:0005737">
    <property type="term" value="C:cytoplasm"/>
    <property type="evidence" value="ECO:0007669"/>
    <property type="project" value="UniProtKB-SubCell"/>
</dbReference>
<dbReference type="GO" id="GO:0016810">
    <property type="term" value="F:hydrolase activity, acting on carbon-nitrogen (but not peptide) bonds"/>
    <property type="evidence" value="ECO:0007669"/>
    <property type="project" value="InterPro"/>
</dbReference>
<dbReference type="GO" id="GO:0005975">
    <property type="term" value="P:carbohydrate metabolic process"/>
    <property type="evidence" value="ECO:0007669"/>
    <property type="project" value="InterPro"/>
</dbReference>
<dbReference type="InterPro" id="IPR002509">
    <property type="entry name" value="NODB_dom"/>
</dbReference>
<dbReference type="PROSITE" id="PS51677">
    <property type="entry name" value="NODB"/>
    <property type="match status" value="1"/>
</dbReference>
<gene>
    <name type="primary">nodB</name>
</gene>
<organism>
    <name type="scientific">Bradyrhizobium sp. (strain NC92)</name>
    <dbReference type="NCBI Taxonomy" id="55395"/>
    <lineage>
        <taxon>Bacteria</taxon>
        <taxon>Pseudomonadati</taxon>
        <taxon>Pseudomonadota</taxon>
        <taxon>Alphaproteobacteria</taxon>
        <taxon>Hyphomicrobiales</taxon>
        <taxon>Nitrobacteraceae</taxon>
        <taxon>Bradyrhizobium</taxon>
    </lineage>
</organism>
<evidence type="ECO:0000250" key="1"/>
<evidence type="ECO:0000255" key="2">
    <source>
        <dbReference type="PROSITE-ProRule" id="PRU01014"/>
    </source>
</evidence>
<evidence type="ECO:0000305" key="3"/>
<sequence>MKHSDNLRSVRSEYADADGSRCVYLTFDDGPNPLCTPPDI</sequence>
<accession>P50353</accession>
<feature type="chain" id="PRO_0000172748" description="Chitooligosaccharide deacetylase">
    <location>
        <begin position="1"/>
        <end position="40" status="greater than"/>
    </location>
</feature>
<feature type="domain" description="NodB homology" evidence="2">
    <location>
        <begin position="21"/>
        <end position="40"/>
    </location>
</feature>
<feature type="active site" description="Proton acceptor" evidence="1">
    <location>
        <position position="28"/>
    </location>
</feature>
<feature type="non-terminal residue">
    <location>
        <position position="40"/>
    </location>
</feature>
<proteinExistence type="inferred from homology"/>
<reference key="1">
    <citation type="journal article" date="1996" name="J. Bacteriol.">
        <title>Bradyrhizobium (Arachis) sp. strain NC92 contains two nodD genes involved in the repression of nodA and a nolA gene required for the efficient nodulation of host plants.</title>
        <authorList>
            <person name="Gillette W.K."/>
            <person name="Elkan G.H."/>
        </authorList>
    </citation>
    <scope>NUCLEOTIDE SEQUENCE [GENOMIC DNA]</scope>
</reference>